<gene>
    <name evidence="1" type="primary">mutL</name>
    <name type="ordered locus">c5254</name>
</gene>
<name>MUTL_ECOL6</name>
<keyword id="KW-0227">DNA damage</keyword>
<keyword id="KW-0234">DNA repair</keyword>
<keyword id="KW-1185">Reference proteome</keyword>
<evidence type="ECO:0000255" key="1">
    <source>
        <dbReference type="HAMAP-Rule" id="MF_00149"/>
    </source>
</evidence>
<evidence type="ECO:0000256" key="2">
    <source>
        <dbReference type="SAM" id="MobiDB-lite"/>
    </source>
</evidence>
<evidence type="ECO:0000305" key="3"/>
<dbReference type="EMBL" id="AE014075">
    <property type="protein sequence ID" value="AAN83676.1"/>
    <property type="status" value="ALT_INIT"/>
    <property type="molecule type" value="Genomic_DNA"/>
</dbReference>
<dbReference type="RefSeq" id="WP_001304682.1">
    <property type="nucleotide sequence ID" value="NZ_CP051263.1"/>
</dbReference>
<dbReference type="SMR" id="Q8FAK9"/>
<dbReference type="STRING" id="199310.c5254"/>
<dbReference type="KEGG" id="ecc:c5254"/>
<dbReference type="eggNOG" id="COG0323">
    <property type="taxonomic scope" value="Bacteria"/>
</dbReference>
<dbReference type="HOGENOM" id="CLU_004131_5_1_6"/>
<dbReference type="Proteomes" id="UP000001410">
    <property type="component" value="Chromosome"/>
</dbReference>
<dbReference type="GO" id="GO:0032300">
    <property type="term" value="C:mismatch repair complex"/>
    <property type="evidence" value="ECO:0007669"/>
    <property type="project" value="InterPro"/>
</dbReference>
<dbReference type="GO" id="GO:0005524">
    <property type="term" value="F:ATP binding"/>
    <property type="evidence" value="ECO:0007669"/>
    <property type="project" value="InterPro"/>
</dbReference>
<dbReference type="GO" id="GO:0016887">
    <property type="term" value="F:ATP hydrolysis activity"/>
    <property type="evidence" value="ECO:0007669"/>
    <property type="project" value="InterPro"/>
</dbReference>
<dbReference type="GO" id="GO:0140664">
    <property type="term" value="F:ATP-dependent DNA damage sensor activity"/>
    <property type="evidence" value="ECO:0007669"/>
    <property type="project" value="InterPro"/>
</dbReference>
<dbReference type="GO" id="GO:0030983">
    <property type="term" value="F:mismatched DNA binding"/>
    <property type="evidence" value="ECO:0007669"/>
    <property type="project" value="InterPro"/>
</dbReference>
<dbReference type="GO" id="GO:0006298">
    <property type="term" value="P:mismatch repair"/>
    <property type="evidence" value="ECO:0007669"/>
    <property type="project" value="UniProtKB-UniRule"/>
</dbReference>
<dbReference type="CDD" id="cd16926">
    <property type="entry name" value="HATPase_MutL-MLH-PMS-like"/>
    <property type="match status" value="1"/>
</dbReference>
<dbReference type="CDD" id="cd03482">
    <property type="entry name" value="MutL_Trans_MutL"/>
    <property type="match status" value="1"/>
</dbReference>
<dbReference type="FunFam" id="3.30.230.10:FF:000013">
    <property type="entry name" value="DNA mismatch repair endonuclease MutL"/>
    <property type="match status" value="1"/>
</dbReference>
<dbReference type="FunFam" id="3.30.565.10:FF:000003">
    <property type="entry name" value="DNA mismatch repair endonuclease MutL"/>
    <property type="match status" value="1"/>
</dbReference>
<dbReference type="FunFam" id="3.30.1370.100:FF:000002">
    <property type="entry name" value="DNA mismatch repair protein MutL"/>
    <property type="match status" value="1"/>
</dbReference>
<dbReference type="Gene3D" id="3.30.230.10">
    <property type="match status" value="1"/>
</dbReference>
<dbReference type="Gene3D" id="3.30.565.10">
    <property type="entry name" value="Histidine kinase-like ATPase, C-terminal domain"/>
    <property type="match status" value="1"/>
</dbReference>
<dbReference type="Gene3D" id="3.30.1540.20">
    <property type="entry name" value="MutL, C-terminal domain, dimerisation subdomain"/>
    <property type="match status" value="1"/>
</dbReference>
<dbReference type="Gene3D" id="3.30.1370.100">
    <property type="entry name" value="MutL, C-terminal domain, regulatory subdomain"/>
    <property type="match status" value="1"/>
</dbReference>
<dbReference type="HAMAP" id="MF_00149">
    <property type="entry name" value="DNA_mis_repair"/>
    <property type="match status" value="1"/>
</dbReference>
<dbReference type="InterPro" id="IPR014762">
    <property type="entry name" value="DNA_mismatch_repair_CS"/>
</dbReference>
<dbReference type="InterPro" id="IPR020667">
    <property type="entry name" value="DNA_mismatch_repair_MutL"/>
</dbReference>
<dbReference type="InterPro" id="IPR013507">
    <property type="entry name" value="DNA_mismatch_S5_2-like"/>
</dbReference>
<dbReference type="InterPro" id="IPR036890">
    <property type="entry name" value="HATPase_C_sf"/>
</dbReference>
<dbReference type="InterPro" id="IPR002099">
    <property type="entry name" value="MutL/Mlh/PMS"/>
</dbReference>
<dbReference type="InterPro" id="IPR038973">
    <property type="entry name" value="MutL/Mlh/Pms-like"/>
</dbReference>
<dbReference type="InterPro" id="IPR014790">
    <property type="entry name" value="MutL_C"/>
</dbReference>
<dbReference type="InterPro" id="IPR042120">
    <property type="entry name" value="MutL_C_dimsub"/>
</dbReference>
<dbReference type="InterPro" id="IPR042121">
    <property type="entry name" value="MutL_C_regsub"/>
</dbReference>
<dbReference type="InterPro" id="IPR037198">
    <property type="entry name" value="MutL_C_sf"/>
</dbReference>
<dbReference type="InterPro" id="IPR020568">
    <property type="entry name" value="Ribosomal_Su5_D2-typ_SF"/>
</dbReference>
<dbReference type="InterPro" id="IPR014721">
    <property type="entry name" value="Ribsml_uS5_D2-typ_fold_subgr"/>
</dbReference>
<dbReference type="NCBIfam" id="TIGR00585">
    <property type="entry name" value="mutl"/>
    <property type="match status" value="1"/>
</dbReference>
<dbReference type="NCBIfam" id="NF000948">
    <property type="entry name" value="PRK00095.1-1"/>
    <property type="match status" value="1"/>
</dbReference>
<dbReference type="PANTHER" id="PTHR10073">
    <property type="entry name" value="DNA MISMATCH REPAIR PROTEIN MLH, PMS, MUTL"/>
    <property type="match status" value="1"/>
</dbReference>
<dbReference type="PANTHER" id="PTHR10073:SF12">
    <property type="entry name" value="DNA MISMATCH REPAIR PROTEIN MLH1"/>
    <property type="match status" value="1"/>
</dbReference>
<dbReference type="Pfam" id="PF01119">
    <property type="entry name" value="DNA_mis_repair"/>
    <property type="match status" value="1"/>
</dbReference>
<dbReference type="Pfam" id="PF13589">
    <property type="entry name" value="HATPase_c_3"/>
    <property type="match status" value="1"/>
</dbReference>
<dbReference type="Pfam" id="PF08676">
    <property type="entry name" value="MutL_C"/>
    <property type="match status" value="1"/>
</dbReference>
<dbReference type="SMART" id="SM01340">
    <property type="entry name" value="DNA_mis_repair"/>
    <property type="match status" value="1"/>
</dbReference>
<dbReference type="SMART" id="SM00853">
    <property type="entry name" value="MutL_C"/>
    <property type="match status" value="1"/>
</dbReference>
<dbReference type="SUPFAM" id="SSF55874">
    <property type="entry name" value="ATPase domain of HSP90 chaperone/DNA topoisomerase II/histidine kinase"/>
    <property type="match status" value="1"/>
</dbReference>
<dbReference type="SUPFAM" id="SSF118116">
    <property type="entry name" value="DNA mismatch repair protein MutL"/>
    <property type="match status" value="1"/>
</dbReference>
<dbReference type="SUPFAM" id="SSF54211">
    <property type="entry name" value="Ribosomal protein S5 domain 2-like"/>
    <property type="match status" value="1"/>
</dbReference>
<dbReference type="PROSITE" id="PS00058">
    <property type="entry name" value="DNA_MISMATCH_REPAIR_1"/>
    <property type="match status" value="1"/>
</dbReference>
<accession>Q8FAK9</accession>
<protein>
    <recommendedName>
        <fullName evidence="1">DNA mismatch repair protein MutL</fullName>
    </recommendedName>
</protein>
<reference key="1">
    <citation type="journal article" date="2002" name="Proc. Natl. Acad. Sci. U.S.A.">
        <title>Extensive mosaic structure revealed by the complete genome sequence of uropathogenic Escherichia coli.</title>
        <authorList>
            <person name="Welch R.A."/>
            <person name="Burland V."/>
            <person name="Plunkett G. III"/>
            <person name="Redford P."/>
            <person name="Roesch P."/>
            <person name="Rasko D."/>
            <person name="Buckles E.L."/>
            <person name="Liou S.-R."/>
            <person name="Boutin A."/>
            <person name="Hackett J."/>
            <person name="Stroud D."/>
            <person name="Mayhew G.F."/>
            <person name="Rose D.J."/>
            <person name="Zhou S."/>
            <person name="Schwartz D.C."/>
            <person name="Perna N.T."/>
            <person name="Mobley H.L.T."/>
            <person name="Donnenberg M.S."/>
            <person name="Blattner F.R."/>
        </authorList>
    </citation>
    <scope>NUCLEOTIDE SEQUENCE [LARGE SCALE GENOMIC DNA]</scope>
    <source>
        <strain>CFT073 / ATCC 700928 / UPEC</strain>
    </source>
</reference>
<sequence length="615" mass="67911">MPIQVLPPQLANQIAAGEVVERPASVVKELVENSLDAGATRIDIDIERGGAKLIRIRDNGCGIKKDELALALARHATSKIASLDDLEAIISLGFRGEALASISSVSRLTLTSRTAEQQEAWQAYAEGRDMDVTVKPAAHPVGTTLEVLDLFYNTPARRKFLRTEKTEFNHIDEIIRRIALARFDVTINLSHNGKIVRQYRAVPEGGQKERRLGAICGTAFLEQALAIEWQHGDLTLRGWVADPNHTTPALAEIQYCYVNGRMMRDRLINHAIRQACEDKLGADQQPAFVLYLEIDPHQVDVNVHPAKHEVRFHQSRLVHDFIYQGVLSVLQQQLETPLPLDDEPQPAPRAIPENRVAAGRNHFAEPAVREPVAPRYSPAPASGSRPAASWPNAQPGYQKQQGEVYRQLLQTPAPMQKPKAPEPQEPALAANSQSFGRVLTIVHSDCALLERDGNISLLSLPVAERWLRQAQLTPGEVPVCAQPLLIPLRLKVSGEEKSALEKAQSALAELGIDFQSDAQHVTIRAVPLPLRQQNLQILIPELIGYLAKQSVFEPGNIAQWIARNLMSEHAQWSMAQAITLLADVERLCPQLVKTPPGGLLQSVDLHPAIKALKDE</sequence>
<organism>
    <name type="scientific">Escherichia coli O6:H1 (strain CFT073 / ATCC 700928 / UPEC)</name>
    <dbReference type="NCBI Taxonomy" id="199310"/>
    <lineage>
        <taxon>Bacteria</taxon>
        <taxon>Pseudomonadati</taxon>
        <taxon>Pseudomonadota</taxon>
        <taxon>Gammaproteobacteria</taxon>
        <taxon>Enterobacterales</taxon>
        <taxon>Enterobacteriaceae</taxon>
        <taxon>Escherichia</taxon>
    </lineage>
</organism>
<proteinExistence type="inferred from homology"/>
<comment type="function">
    <text evidence="1">This protein is involved in the repair of mismatches in DNA. It is required for dam-dependent methyl-directed DNA mismatch repair. May act as a 'molecular matchmaker', a protein that promotes the formation of a stable complex between two or more DNA-binding proteins in an ATP-dependent manner without itself being part of a final effector complex.</text>
</comment>
<comment type="similarity">
    <text evidence="1">Belongs to the DNA mismatch repair MutL/HexB family.</text>
</comment>
<comment type="sequence caution" evidence="3">
    <conflict type="erroneous initiation">
        <sequence resource="EMBL-CDS" id="AAN83676"/>
    </conflict>
</comment>
<feature type="chain" id="PRO_0000177945" description="DNA mismatch repair protein MutL">
    <location>
        <begin position="1"/>
        <end position="615"/>
    </location>
</feature>
<feature type="region of interest" description="Disordered" evidence="2">
    <location>
        <begin position="362"/>
        <end position="397"/>
    </location>
</feature>
<feature type="compositionally biased region" description="Low complexity" evidence="2">
    <location>
        <begin position="373"/>
        <end position="391"/>
    </location>
</feature>